<protein>
    <recommendedName>
        <fullName evidence="2">Superoxide dismutase [Cu-Zn]</fullName>
        <ecNumber>1.15.1.1</ecNumber>
    </recommendedName>
    <alternativeName>
        <fullName evidence="2">Superoxide dismutase 1</fullName>
    </alternativeName>
</protein>
<organism>
    <name type="scientific">Drosophila yakuba</name>
    <name type="common">Fruit fly</name>
    <dbReference type="NCBI Taxonomy" id="7245"/>
    <lineage>
        <taxon>Eukaryota</taxon>
        <taxon>Metazoa</taxon>
        <taxon>Ecdysozoa</taxon>
        <taxon>Arthropoda</taxon>
        <taxon>Hexapoda</taxon>
        <taxon>Insecta</taxon>
        <taxon>Pterygota</taxon>
        <taxon>Neoptera</taxon>
        <taxon>Endopterygota</taxon>
        <taxon>Diptera</taxon>
        <taxon>Brachycera</taxon>
        <taxon>Muscomorpha</taxon>
        <taxon>Ephydroidea</taxon>
        <taxon>Drosophilidae</taxon>
        <taxon>Drosophila</taxon>
        <taxon>Sophophora</taxon>
    </lineage>
</organism>
<dbReference type="EC" id="1.15.1.1"/>
<dbReference type="EMBL" id="AF127159">
    <property type="protein sequence ID" value="AAF23598.1"/>
    <property type="molecule type" value="Genomic_DNA"/>
</dbReference>
<dbReference type="SMR" id="Q9U4X3"/>
<dbReference type="eggNOG" id="KOG0441">
    <property type="taxonomic scope" value="Eukaryota"/>
</dbReference>
<dbReference type="OrthoDB" id="2015551at2759"/>
<dbReference type="GO" id="GO:0005777">
    <property type="term" value="C:peroxisome"/>
    <property type="evidence" value="ECO:0007669"/>
    <property type="project" value="EnsemblMetazoa"/>
</dbReference>
<dbReference type="GO" id="GO:0005507">
    <property type="term" value="F:copper ion binding"/>
    <property type="evidence" value="ECO:0007669"/>
    <property type="project" value="InterPro"/>
</dbReference>
<dbReference type="GO" id="GO:0042803">
    <property type="term" value="F:protein homodimerization activity"/>
    <property type="evidence" value="ECO:0007669"/>
    <property type="project" value="EnsemblMetazoa"/>
</dbReference>
<dbReference type="GO" id="GO:0004784">
    <property type="term" value="F:superoxide dismutase activity"/>
    <property type="evidence" value="ECO:0007669"/>
    <property type="project" value="UniProtKB-EC"/>
</dbReference>
<dbReference type="GO" id="GO:0008340">
    <property type="term" value="P:determination of adult lifespan"/>
    <property type="evidence" value="ECO:0007669"/>
    <property type="project" value="EnsemblMetazoa"/>
</dbReference>
<dbReference type="GO" id="GO:1901526">
    <property type="term" value="P:positive regulation of mitophagy"/>
    <property type="evidence" value="ECO:0007669"/>
    <property type="project" value="EnsemblMetazoa"/>
</dbReference>
<dbReference type="GO" id="GO:0048167">
    <property type="term" value="P:regulation of synaptic plasticity"/>
    <property type="evidence" value="ECO:0007669"/>
    <property type="project" value="EnsemblMetazoa"/>
</dbReference>
<dbReference type="CDD" id="cd00305">
    <property type="entry name" value="Cu-Zn_Superoxide_Dismutase"/>
    <property type="match status" value="1"/>
</dbReference>
<dbReference type="FunFam" id="2.60.40.200:FF:000001">
    <property type="entry name" value="Superoxide dismutase [Cu-Zn]"/>
    <property type="match status" value="1"/>
</dbReference>
<dbReference type="Gene3D" id="2.60.40.200">
    <property type="entry name" value="Superoxide dismutase, copper/zinc binding domain"/>
    <property type="match status" value="1"/>
</dbReference>
<dbReference type="InterPro" id="IPR036423">
    <property type="entry name" value="SOD-like_Cu/Zn_dom_sf"/>
</dbReference>
<dbReference type="InterPro" id="IPR024134">
    <property type="entry name" value="SOD_Cu/Zn_/chaperone"/>
</dbReference>
<dbReference type="InterPro" id="IPR018152">
    <property type="entry name" value="SOD_Cu/Zn_BS"/>
</dbReference>
<dbReference type="InterPro" id="IPR001424">
    <property type="entry name" value="SOD_Cu_Zn_dom"/>
</dbReference>
<dbReference type="PANTHER" id="PTHR10003">
    <property type="entry name" value="SUPEROXIDE DISMUTASE CU-ZN -RELATED"/>
    <property type="match status" value="1"/>
</dbReference>
<dbReference type="Pfam" id="PF00080">
    <property type="entry name" value="Sod_Cu"/>
    <property type="match status" value="1"/>
</dbReference>
<dbReference type="PRINTS" id="PR00068">
    <property type="entry name" value="CUZNDISMTASE"/>
</dbReference>
<dbReference type="SUPFAM" id="SSF49329">
    <property type="entry name" value="Cu,Zn superoxide dismutase-like"/>
    <property type="match status" value="1"/>
</dbReference>
<dbReference type="PROSITE" id="PS00087">
    <property type="entry name" value="SOD_CU_ZN_1"/>
    <property type="match status" value="1"/>
</dbReference>
<dbReference type="PROSITE" id="PS00332">
    <property type="entry name" value="SOD_CU_ZN_2"/>
    <property type="match status" value="1"/>
</dbReference>
<keyword id="KW-0049">Antioxidant</keyword>
<keyword id="KW-0186">Copper</keyword>
<keyword id="KW-0963">Cytoplasm</keyword>
<keyword id="KW-1015">Disulfide bond</keyword>
<keyword id="KW-0479">Metal-binding</keyword>
<keyword id="KW-0560">Oxidoreductase</keyword>
<keyword id="KW-0862">Zinc</keyword>
<comment type="function">
    <text>Destroys radicals which are normally produced within the cells and which are toxic to biological systems.</text>
</comment>
<comment type="catalytic activity">
    <reaction>
        <text>2 superoxide + 2 H(+) = H2O2 + O2</text>
        <dbReference type="Rhea" id="RHEA:20696"/>
        <dbReference type="ChEBI" id="CHEBI:15378"/>
        <dbReference type="ChEBI" id="CHEBI:15379"/>
        <dbReference type="ChEBI" id="CHEBI:16240"/>
        <dbReference type="ChEBI" id="CHEBI:18421"/>
        <dbReference type="EC" id="1.15.1.1"/>
    </reaction>
</comment>
<comment type="cofactor">
    <cofactor evidence="1">
        <name>Cu cation</name>
        <dbReference type="ChEBI" id="CHEBI:23378"/>
    </cofactor>
    <text evidence="1">Binds 1 copper ion per subunit.</text>
</comment>
<comment type="cofactor">
    <cofactor evidence="1">
        <name>Zn(2+)</name>
        <dbReference type="ChEBI" id="CHEBI:29105"/>
    </cofactor>
    <text evidence="1">Binds 1 zinc ion per subunit.</text>
</comment>
<comment type="subunit">
    <text evidence="1">Homodimer.</text>
</comment>
<comment type="subcellular location">
    <subcellularLocation>
        <location evidence="1">Cytoplasm</location>
    </subcellularLocation>
</comment>
<comment type="similarity">
    <text evidence="3">Belongs to the Cu-Zn superoxide dismutase family.</text>
</comment>
<sequence>MVVKAVCVINGDAKGTVFFEQESSETPVKVSGEVCGLAKGLHGFHVHEFGDNTNGCMSSGPHFNPYGKEHGAPVDENRHLGDLGNIEATGDCPTKVSITDSKITLFGADSIIGRTVVVHADADDLGKGGHELSKSTGNAGARIGCGVIGIAKV</sequence>
<name>SODC_DROYA</name>
<gene>
    <name evidence="2" type="primary">Sod1</name>
    <name evidence="2" type="synonym">Sod</name>
</gene>
<evidence type="ECO:0000250" key="1"/>
<evidence type="ECO:0000250" key="2">
    <source>
        <dbReference type="UniProtKB" id="P61851"/>
    </source>
</evidence>
<evidence type="ECO:0000305" key="3"/>
<proteinExistence type="inferred from homology"/>
<reference key="1">
    <citation type="submission" date="1999-02" db="EMBL/GenBank/DDBJ databases">
        <title>Phylogenetic analysis of Drosophila melanogaster group based on Cu-Zn superoxide dismutase gene sequences.</title>
        <authorList>
            <person name="Arxontaki K."/>
            <person name="Kastanis P."/>
            <person name="Tsakas S."/>
            <person name="Loukas M."/>
            <person name="Eliopoulos E."/>
        </authorList>
    </citation>
    <scope>NUCLEOTIDE SEQUENCE [GENOMIC DNA]</scope>
</reference>
<accession>Q9U4X3</accession>
<feature type="initiator methionine" description="Removed" evidence="1">
    <location>
        <position position="1"/>
    </location>
</feature>
<feature type="chain" id="PRO_0000164100" description="Superoxide dismutase [Cu-Zn]">
    <location>
        <begin position="2"/>
        <end position="153"/>
    </location>
</feature>
<feature type="binding site" evidence="1">
    <location>
        <position position="45"/>
    </location>
    <ligand>
        <name>Cu cation</name>
        <dbReference type="ChEBI" id="CHEBI:23378"/>
        <note>catalytic</note>
    </ligand>
</feature>
<feature type="binding site" evidence="1">
    <location>
        <position position="47"/>
    </location>
    <ligand>
        <name>Cu cation</name>
        <dbReference type="ChEBI" id="CHEBI:23378"/>
        <note>catalytic</note>
    </ligand>
</feature>
<feature type="binding site" evidence="1">
    <location>
        <position position="62"/>
    </location>
    <ligand>
        <name>Cu cation</name>
        <dbReference type="ChEBI" id="CHEBI:23378"/>
        <note>catalytic</note>
    </ligand>
</feature>
<feature type="binding site" evidence="1">
    <location>
        <position position="62"/>
    </location>
    <ligand>
        <name>Zn(2+)</name>
        <dbReference type="ChEBI" id="CHEBI:29105"/>
        <note>structural</note>
    </ligand>
</feature>
<feature type="binding site" evidence="1">
    <location>
        <position position="70"/>
    </location>
    <ligand>
        <name>Zn(2+)</name>
        <dbReference type="ChEBI" id="CHEBI:29105"/>
        <note>structural</note>
    </ligand>
</feature>
<feature type="binding site" evidence="1">
    <location>
        <position position="79"/>
    </location>
    <ligand>
        <name>Zn(2+)</name>
        <dbReference type="ChEBI" id="CHEBI:29105"/>
        <note>structural</note>
    </ligand>
</feature>
<feature type="binding site" evidence="1">
    <location>
        <position position="82"/>
    </location>
    <ligand>
        <name>Zn(2+)</name>
        <dbReference type="ChEBI" id="CHEBI:29105"/>
        <note>structural</note>
    </ligand>
</feature>
<feature type="binding site" evidence="1">
    <location>
        <position position="119"/>
    </location>
    <ligand>
        <name>Cu cation</name>
        <dbReference type="ChEBI" id="CHEBI:23378"/>
        <note>catalytic</note>
    </ligand>
</feature>
<feature type="disulfide bond" evidence="1">
    <location>
        <begin position="56"/>
        <end position="145"/>
    </location>
</feature>